<gene>
    <name evidence="9" type="primary">TNFSF18</name>
    <name type="synonym">AITRL</name>
    <name type="synonym">GITRL</name>
    <name type="synonym">TL6</name>
    <name type="ORF">UNQ149/PRO175</name>
</gene>
<evidence type="ECO:0000250" key="1"/>
<evidence type="ECO:0000250" key="2">
    <source>
        <dbReference type="UniProtKB" id="Q7TS55"/>
    </source>
</evidence>
<evidence type="ECO:0000255" key="3"/>
<evidence type="ECO:0000255" key="4">
    <source>
        <dbReference type="PROSITE-ProRule" id="PRU01387"/>
    </source>
</evidence>
<evidence type="ECO:0000269" key="5">
    <source>
    </source>
</evidence>
<evidence type="ECO:0000269" key="6">
    <source>
    </source>
</evidence>
<evidence type="ECO:0000269" key="7">
    <source>
    </source>
</evidence>
<evidence type="ECO:0000305" key="8"/>
<evidence type="ECO:0000312" key="9">
    <source>
        <dbReference type="HGNC" id="HGNC:11932"/>
    </source>
</evidence>
<evidence type="ECO:0007829" key="10">
    <source>
        <dbReference type="PDB" id="2R32"/>
    </source>
</evidence>
<evidence type="ECO:0007829" key="11">
    <source>
        <dbReference type="PDB" id="3B93"/>
    </source>
</evidence>
<evidence type="ECO:0007829" key="12">
    <source>
        <dbReference type="PDB" id="7KHD"/>
    </source>
</evidence>
<evidence type="ECO:0007829" key="13">
    <source>
        <dbReference type="PDB" id="7LAW"/>
    </source>
</evidence>
<keyword id="KW-0002">3D-structure</keyword>
<keyword id="KW-1064">Adaptive immunity</keyword>
<keyword id="KW-1003">Cell membrane</keyword>
<keyword id="KW-0202">Cytokine</keyword>
<keyword id="KW-1015">Disulfide bond</keyword>
<keyword id="KW-0325">Glycoprotein</keyword>
<keyword id="KW-0391">Immunity</keyword>
<keyword id="KW-0472">Membrane</keyword>
<keyword id="KW-1267">Proteomics identification</keyword>
<keyword id="KW-1185">Reference proteome</keyword>
<keyword id="KW-0735">Signal-anchor</keyword>
<keyword id="KW-0812">Transmembrane</keyword>
<keyword id="KW-1133">Transmembrane helix</keyword>
<proteinExistence type="evidence at protein level"/>
<sequence>MCLSHLENMPLSHSRTQGAQRSSWKLWLFCSIVMLLFLCSFSWLIFIFLQLETAKEPCMAKFGPLPSKWQMASSEPPCVNKVSDWKLEILQNGLYLIYGQVAPNANYNDVAPFEVRLYKNKDMIQTLTNKSKIQNVGGTYELHVGDTIDLIFNSEHQVLKNNTYWGIILLANPQFIS</sequence>
<feature type="chain" id="PRO_0000185506" description="Tumor necrosis factor ligand superfamily member 18">
    <location>
        <begin position="1"/>
        <end position="177"/>
    </location>
</feature>
<feature type="topological domain" description="Cytoplasmic" evidence="3">
    <location>
        <begin position="1"/>
        <end position="27"/>
    </location>
</feature>
<feature type="transmembrane region" description="Helical; Signal-anchor for type II membrane protein" evidence="3">
    <location>
        <begin position="28"/>
        <end position="48"/>
    </location>
</feature>
<feature type="topological domain" description="Extracellular" evidence="3">
    <location>
        <begin position="49"/>
        <end position="177"/>
    </location>
</feature>
<feature type="domain" description="THD" evidence="4">
    <location>
        <begin position="47"/>
        <end position="170"/>
    </location>
</feature>
<feature type="glycosylation site" description="N-linked (GlcNAc...) asparagine" evidence="3">
    <location>
        <position position="129"/>
    </location>
</feature>
<feature type="glycosylation site" description="N-linked (GlcNAc...) asparagine" evidence="3">
    <location>
        <position position="161"/>
    </location>
</feature>
<feature type="disulfide bond" evidence="4 6">
    <location>
        <begin position="58"/>
        <end position="78"/>
    </location>
</feature>
<feature type="strand" evidence="10">
    <location>
        <begin position="59"/>
        <end position="62"/>
    </location>
</feature>
<feature type="turn" evidence="12">
    <location>
        <begin position="65"/>
        <end position="67"/>
    </location>
</feature>
<feature type="strand" evidence="10">
    <location>
        <begin position="69"/>
        <end position="72"/>
    </location>
</feature>
<feature type="strand" evidence="10">
    <location>
        <begin position="78"/>
        <end position="83"/>
    </location>
</feature>
<feature type="strand" evidence="10">
    <location>
        <begin position="86"/>
        <end position="89"/>
    </location>
</feature>
<feature type="strand" evidence="10">
    <location>
        <begin position="93"/>
        <end position="101"/>
    </location>
</feature>
<feature type="strand" evidence="11">
    <location>
        <begin position="109"/>
        <end position="111"/>
    </location>
</feature>
<feature type="strand" evidence="10">
    <location>
        <begin position="115"/>
        <end position="119"/>
    </location>
</feature>
<feature type="strand" evidence="10">
    <location>
        <begin position="122"/>
        <end position="127"/>
    </location>
</feature>
<feature type="strand" evidence="10">
    <location>
        <begin position="130"/>
        <end position="132"/>
    </location>
</feature>
<feature type="strand" evidence="10">
    <location>
        <begin position="138"/>
        <end position="142"/>
    </location>
</feature>
<feature type="strand" evidence="10">
    <location>
        <begin position="147"/>
        <end position="154"/>
    </location>
</feature>
<feature type="helix" evidence="10">
    <location>
        <begin position="155"/>
        <end position="157"/>
    </location>
</feature>
<feature type="helix" evidence="13">
    <location>
        <begin position="160"/>
        <end position="162"/>
    </location>
</feature>
<feature type="strand" evidence="10">
    <location>
        <begin position="164"/>
        <end position="171"/>
    </location>
</feature>
<reference key="1">
    <citation type="journal article" date="2006" name="Nature">
        <title>The DNA sequence and biological annotation of human chromosome 1.</title>
        <authorList>
            <person name="Gregory S.G."/>
            <person name="Barlow K.F."/>
            <person name="McLay K.E."/>
            <person name="Kaul R."/>
            <person name="Swarbreck D."/>
            <person name="Dunham A."/>
            <person name="Scott C.E."/>
            <person name="Howe K.L."/>
            <person name="Woodfine K."/>
            <person name="Spencer C.C.A."/>
            <person name="Jones M.C."/>
            <person name="Gillson C."/>
            <person name="Searle S."/>
            <person name="Zhou Y."/>
            <person name="Kokocinski F."/>
            <person name="McDonald L."/>
            <person name="Evans R."/>
            <person name="Phillips K."/>
            <person name="Atkinson A."/>
            <person name="Cooper R."/>
            <person name="Jones C."/>
            <person name="Hall R.E."/>
            <person name="Andrews T.D."/>
            <person name="Lloyd C."/>
            <person name="Ainscough R."/>
            <person name="Almeida J.P."/>
            <person name="Ambrose K.D."/>
            <person name="Anderson F."/>
            <person name="Andrew R.W."/>
            <person name="Ashwell R.I.S."/>
            <person name="Aubin K."/>
            <person name="Babbage A.K."/>
            <person name="Bagguley C.L."/>
            <person name="Bailey J."/>
            <person name="Beasley H."/>
            <person name="Bethel G."/>
            <person name="Bird C.P."/>
            <person name="Bray-Allen S."/>
            <person name="Brown J.Y."/>
            <person name="Brown A.J."/>
            <person name="Buckley D."/>
            <person name="Burton J."/>
            <person name="Bye J."/>
            <person name="Carder C."/>
            <person name="Chapman J.C."/>
            <person name="Clark S.Y."/>
            <person name="Clarke G."/>
            <person name="Clee C."/>
            <person name="Cobley V."/>
            <person name="Collier R.E."/>
            <person name="Corby N."/>
            <person name="Coville G.J."/>
            <person name="Davies J."/>
            <person name="Deadman R."/>
            <person name="Dunn M."/>
            <person name="Earthrowl M."/>
            <person name="Ellington A.G."/>
            <person name="Errington H."/>
            <person name="Frankish A."/>
            <person name="Frankland J."/>
            <person name="French L."/>
            <person name="Garner P."/>
            <person name="Garnett J."/>
            <person name="Gay L."/>
            <person name="Ghori M.R.J."/>
            <person name="Gibson R."/>
            <person name="Gilby L.M."/>
            <person name="Gillett W."/>
            <person name="Glithero R.J."/>
            <person name="Grafham D.V."/>
            <person name="Griffiths C."/>
            <person name="Griffiths-Jones S."/>
            <person name="Grocock R."/>
            <person name="Hammond S."/>
            <person name="Harrison E.S.I."/>
            <person name="Hart E."/>
            <person name="Haugen E."/>
            <person name="Heath P.D."/>
            <person name="Holmes S."/>
            <person name="Holt K."/>
            <person name="Howden P.J."/>
            <person name="Hunt A.R."/>
            <person name="Hunt S.E."/>
            <person name="Hunter G."/>
            <person name="Isherwood J."/>
            <person name="James R."/>
            <person name="Johnson C."/>
            <person name="Johnson D."/>
            <person name="Joy A."/>
            <person name="Kay M."/>
            <person name="Kershaw J.K."/>
            <person name="Kibukawa M."/>
            <person name="Kimberley A.M."/>
            <person name="King A."/>
            <person name="Knights A.J."/>
            <person name="Lad H."/>
            <person name="Laird G."/>
            <person name="Lawlor S."/>
            <person name="Leongamornlert D.A."/>
            <person name="Lloyd D.M."/>
            <person name="Loveland J."/>
            <person name="Lovell J."/>
            <person name="Lush M.J."/>
            <person name="Lyne R."/>
            <person name="Martin S."/>
            <person name="Mashreghi-Mohammadi M."/>
            <person name="Matthews L."/>
            <person name="Matthews N.S.W."/>
            <person name="McLaren S."/>
            <person name="Milne S."/>
            <person name="Mistry S."/>
            <person name="Moore M.J.F."/>
            <person name="Nickerson T."/>
            <person name="O'Dell C.N."/>
            <person name="Oliver K."/>
            <person name="Palmeiri A."/>
            <person name="Palmer S.A."/>
            <person name="Parker A."/>
            <person name="Patel D."/>
            <person name="Pearce A.V."/>
            <person name="Peck A.I."/>
            <person name="Pelan S."/>
            <person name="Phelps K."/>
            <person name="Phillimore B.J."/>
            <person name="Plumb R."/>
            <person name="Rajan J."/>
            <person name="Raymond C."/>
            <person name="Rouse G."/>
            <person name="Saenphimmachak C."/>
            <person name="Sehra H.K."/>
            <person name="Sheridan E."/>
            <person name="Shownkeen R."/>
            <person name="Sims S."/>
            <person name="Skuce C.D."/>
            <person name="Smith M."/>
            <person name="Steward C."/>
            <person name="Subramanian S."/>
            <person name="Sycamore N."/>
            <person name="Tracey A."/>
            <person name="Tromans A."/>
            <person name="Van Helmond Z."/>
            <person name="Wall M."/>
            <person name="Wallis J.M."/>
            <person name="White S."/>
            <person name="Whitehead S.L."/>
            <person name="Wilkinson J.E."/>
            <person name="Willey D.L."/>
            <person name="Williams H."/>
            <person name="Wilming L."/>
            <person name="Wray P.W."/>
            <person name="Wu Z."/>
            <person name="Coulson A."/>
            <person name="Vaudin M."/>
            <person name="Sulston J.E."/>
            <person name="Durbin R.M."/>
            <person name="Hubbard T."/>
            <person name="Wooster R."/>
            <person name="Dunham I."/>
            <person name="Carter N.P."/>
            <person name="McVean G."/>
            <person name="Ross M.T."/>
            <person name="Harrow J."/>
            <person name="Olson M.V."/>
            <person name="Beck S."/>
            <person name="Rogers J."/>
            <person name="Bentley D.R."/>
        </authorList>
    </citation>
    <scope>NUCLEOTIDE SEQUENCE [LARGE SCALE GENOMIC DNA]</scope>
</reference>
<reference key="2">
    <citation type="submission" date="2005-07" db="EMBL/GenBank/DDBJ databases">
        <authorList>
            <person name="Mural R.J."/>
            <person name="Istrail S."/>
            <person name="Sutton G.G."/>
            <person name="Florea L."/>
            <person name="Halpern A.L."/>
            <person name="Mobarry C.M."/>
            <person name="Lippert R."/>
            <person name="Walenz B."/>
            <person name="Shatkay H."/>
            <person name="Dew I."/>
            <person name="Miller J.R."/>
            <person name="Flanigan M.J."/>
            <person name="Edwards N.J."/>
            <person name="Bolanos R."/>
            <person name="Fasulo D."/>
            <person name="Halldorsson B.V."/>
            <person name="Hannenhalli S."/>
            <person name="Turner R."/>
            <person name="Yooseph S."/>
            <person name="Lu F."/>
            <person name="Nusskern D.R."/>
            <person name="Shue B.C."/>
            <person name="Zheng X.H."/>
            <person name="Zhong F."/>
            <person name="Delcher A.L."/>
            <person name="Huson D.H."/>
            <person name="Kravitz S.A."/>
            <person name="Mouchard L."/>
            <person name="Reinert K."/>
            <person name="Remington K.A."/>
            <person name="Clark A.G."/>
            <person name="Waterman M.S."/>
            <person name="Eichler E.E."/>
            <person name="Adams M.D."/>
            <person name="Hunkapiller M.W."/>
            <person name="Myers E.W."/>
            <person name="Venter J.C."/>
        </authorList>
    </citation>
    <scope>NUCLEOTIDE SEQUENCE [LARGE SCALE GENOMIC DNA]</scope>
</reference>
<reference key="3">
    <citation type="journal article" date="2004" name="Genome Res.">
        <title>The status, quality, and expansion of the NIH full-length cDNA project: the Mammalian Gene Collection (MGC).</title>
        <authorList>
            <consortium name="The MGC Project Team"/>
        </authorList>
    </citation>
    <scope>NUCLEOTIDE SEQUENCE [LARGE SCALE MRNA]</scope>
    <source>
        <tissue>Brain</tissue>
    </source>
</reference>
<reference key="4">
    <citation type="journal article" date="2004" name="Nat. Genet.">
        <title>Complete sequencing and characterization of 21,243 full-length human cDNAs.</title>
        <authorList>
            <person name="Ota T."/>
            <person name="Suzuki Y."/>
            <person name="Nishikawa T."/>
            <person name="Otsuki T."/>
            <person name="Sugiyama T."/>
            <person name="Irie R."/>
            <person name="Wakamatsu A."/>
            <person name="Hayashi K."/>
            <person name="Sato H."/>
            <person name="Nagai K."/>
            <person name="Kimura K."/>
            <person name="Makita H."/>
            <person name="Sekine M."/>
            <person name="Obayashi M."/>
            <person name="Nishi T."/>
            <person name="Shibahara T."/>
            <person name="Tanaka T."/>
            <person name="Ishii S."/>
            <person name="Yamamoto J."/>
            <person name="Saito K."/>
            <person name="Kawai Y."/>
            <person name="Isono Y."/>
            <person name="Nakamura Y."/>
            <person name="Nagahari K."/>
            <person name="Murakami K."/>
            <person name="Yasuda T."/>
            <person name="Iwayanagi T."/>
            <person name="Wagatsuma M."/>
            <person name="Shiratori A."/>
            <person name="Sudo H."/>
            <person name="Hosoiri T."/>
            <person name="Kaku Y."/>
            <person name="Kodaira H."/>
            <person name="Kondo H."/>
            <person name="Sugawara M."/>
            <person name="Takahashi M."/>
            <person name="Kanda K."/>
            <person name="Yokoi T."/>
            <person name="Furuya T."/>
            <person name="Kikkawa E."/>
            <person name="Omura Y."/>
            <person name="Abe K."/>
            <person name="Kamihara K."/>
            <person name="Katsuta N."/>
            <person name="Sato K."/>
            <person name="Tanikawa M."/>
            <person name="Yamazaki M."/>
            <person name="Ninomiya K."/>
            <person name="Ishibashi T."/>
            <person name="Yamashita H."/>
            <person name="Murakawa K."/>
            <person name="Fujimori K."/>
            <person name="Tanai H."/>
            <person name="Kimata M."/>
            <person name="Watanabe M."/>
            <person name="Hiraoka S."/>
            <person name="Chiba Y."/>
            <person name="Ishida S."/>
            <person name="Ono Y."/>
            <person name="Takiguchi S."/>
            <person name="Watanabe S."/>
            <person name="Yosida M."/>
            <person name="Hotuta T."/>
            <person name="Kusano J."/>
            <person name="Kanehori K."/>
            <person name="Takahashi-Fujii A."/>
            <person name="Hara H."/>
            <person name="Tanase T.-O."/>
            <person name="Nomura Y."/>
            <person name="Togiya S."/>
            <person name="Komai F."/>
            <person name="Hara R."/>
            <person name="Takeuchi K."/>
            <person name="Arita M."/>
            <person name="Imose N."/>
            <person name="Musashino K."/>
            <person name="Yuuki H."/>
            <person name="Oshima A."/>
            <person name="Sasaki N."/>
            <person name="Aotsuka S."/>
            <person name="Yoshikawa Y."/>
            <person name="Matsunawa H."/>
            <person name="Ichihara T."/>
            <person name="Shiohata N."/>
            <person name="Sano S."/>
            <person name="Moriya S."/>
            <person name="Momiyama H."/>
            <person name="Satoh N."/>
            <person name="Takami S."/>
            <person name="Terashima Y."/>
            <person name="Suzuki O."/>
            <person name="Nakagawa S."/>
            <person name="Senoh A."/>
            <person name="Mizoguchi H."/>
            <person name="Goto Y."/>
            <person name="Shimizu F."/>
            <person name="Wakebe H."/>
            <person name="Hishigaki H."/>
            <person name="Watanabe T."/>
            <person name="Sugiyama A."/>
            <person name="Takemoto M."/>
            <person name="Kawakami B."/>
            <person name="Yamazaki M."/>
            <person name="Watanabe K."/>
            <person name="Kumagai A."/>
            <person name="Itakura S."/>
            <person name="Fukuzumi Y."/>
            <person name="Fujimori Y."/>
            <person name="Komiyama M."/>
            <person name="Tashiro H."/>
            <person name="Tanigami A."/>
            <person name="Fujiwara T."/>
            <person name="Ono T."/>
            <person name="Yamada K."/>
            <person name="Fujii Y."/>
            <person name="Ozaki K."/>
            <person name="Hirao M."/>
            <person name="Ohmori Y."/>
            <person name="Kawabata A."/>
            <person name="Hikiji T."/>
            <person name="Kobatake N."/>
            <person name="Inagaki H."/>
            <person name="Ikema Y."/>
            <person name="Okamoto S."/>
            <person name="Okitani R."/>
            <person name="Kawakami T."/>
            <person name="Noguchi S."/>
            <person name="Itoh T."/>
            <person name="Shigeta K."/>
            <person name="Senba T."/>
            <person name="Matsumura K."/>
            <person name="Nakajima Y."/>
            <person name="Mizuno T."/>
            <person name="Morinaga M."/>
            <person name="Sasaki M."/>
            <person name="Togashi T."/>
            <person name="Oyama M."/>
            <person name="Hata H."/>
            <person name="Watanabe M."/>
            <person name="Komatsu T."/>
            <person name="Mizushima-Sugano J."/>
            <person name="Satoh T."/>
            <person name="Shirai Y."/>
            <person name="Takahashi Y."/>
            <person name="Nakagawa K."/>
            <person name="Okumura K."/>
            <person name="Nagase T."/>
            <person name="Nomura N."/>
            <person name="Kikuchi H."/>
            <person name="Masuho Y."/>
            <person name="Yamashita R."/>
            <person name="Nakai K."/>
            <person name="Yada T."/>
            <person name="Nakamura Y."/>
            <person name="Ohara O."/>
            <person name="Isogai T."/>
            <person name="Sugano S."/>
        </authorList>
    </citation>
    <scope>NUCLEOTIDE SEQUENCE [LARGE SCALE MRNA]</scope>
</reference>
<reference key="5">
    <citation type="journal article" date="2003" name="Genome Res.">
        <title>The secreted protein discovery initiative (SPDI), a large-scale effort to identify novel human secreted and transmembrane proteins: a bioinformatics assessment.</title>
        <authorList>
            <person name="Clark H.F."/>
            <person name="Gurney A.L."/>
            <person name="Abaya E."/>
            <person name="Baker K."/>
            <person name="Baldwin D.T."/>
            <person name="Brush J."/>
            <person name="Chen J."/>
            <person name="Chow B."/>
            <person name="Chui C."/>
            <person name="Crowley C."/>
            <person name="Currell B."/>
            <person name="Deuel B."/>
            <person name="Dowd P."/>
            <person name="Eaton D."/>
            <person name="Foster J.S."/>
            <person name="Grimaldi C."/>
            <person name="Gu Q."/>
            <person name="Hass P.E."/>
            <person name="Heldens S."/>
            <person name="Huang A."/>
            <person name="Kim H.S."/>
            <person name="Klimowski L."/>
            <person name="Jin Y."/>
            <person name="Johnson S."/>
            <person name="Lee J."/>
            <person name="Lewis L."/>
            <person name="Liao D."/>
            <person name="Mark M.R."/>
            <person name="Robbie E."/>
            <person name="Sanchez C."/>
            <person name="Schoenfeld J."/>
            <person name="Seshagiri S."/>
            <person name="Simmons L."/>
            <person name="Singh J."/>
            <person name="Smith V."/>
            <person name="Stinson J."/>
            <person name="Vagts A."/>
            <person name="Vandlen R.L."/>
            <person name="Watanabe C."/>
            <person name="Wieand D."/>
            <person name="Woods K."/>
            <person name="Xie M.-H."/>
            <person name="Yansura D.G."/>
            <person name="Yi S."/>
            <person name="Yu G."/>
            <person name="Yuan J."/>
            <person name="Zhang M."/>
            <person name="Zhang Z."/>
            <person name="Goddard A.D."/>
            <person name="Wood W.I."/>
            <person name="Godowski P.J."/>
            <person name="Gray A.M."/>
        </authorList>
    </citation>
    <scope>NUCLEOTIDE SEQUENCE [LARGE SCALE MRNA]</scope>
</reference>
<reference key="6">
    <citation type="journal article" date="1999" name="Curr. Biol.">
        <title>Identification of a new member of the tumor necrosis factor family and its receptor, a human ortholog of mouse GITR.</title>
        <authorList>
            <person name="Gurney A.L."/>
            <person name="Marsters S.A."/>
            <person name="Huang R.M."/>
            <person name="Pitti R.M."/>
            <person name="Mark D.T."/>
            <person name="Baldwin D.T."/>
            <person name="Gray A.M."/>
            <person name="Dowd A.D."/>
            <person name="Brush A.D."/>
            <person name="Heldens A.D."/>
            <person name="Schow A.D."/>
            <person name="Goddard A.D."/>
            <person name="Wood W.I."/>
            <person name="Baker K.P."/>
            <person name="Godowski P.J."/>
            <person name="Ashkenazi A."/>
        </authorList>
    </citation>
    <scope>NUCLEOTIDE SEQUENCE [MRNA]</scope>
    <source>
        <tissue>Umbilical vein</tissue>
    </source>
</reference>
<reference key="7">
    <citation type="journal article" date="1999" name="J. Biol. Chem.">
        <title>Identification of a novel activation-inducible protein of the tumor necrosis factor receptor superfamily and its ligand.</title>
        <authorList>
            <person name="Kwon B."/>
            <person name="Yu K.-Y."/>
            <person name="Ni J."/>
            <person name="Yu G.-L."/>
            <person name="Jang I.-K."/>
            <person name="Kim Y.-J."/>
            <person name="Xing L."/>
            <person name="Liu D."/>
            <person name="Wang S.-X."/>
            <person name="Kwon B.S."/>
        </authorList>
    </citation>
    <scope>NUCLEOTIDE SEQUENCE [MRNA] OF 9-177</scope>
    <source>
        <tissue>Brain</tissue>
    </source>
</reference>
<reference key="8">
    <citation type="journal article" date="2007" name="J. Leukoc. Biol.">
        <title>Expression of human GITRL on myeloid dendritic cells enhances their immunostimulatory function but does not abrogate the suppressive effect of CD4+CD25+ regulatory T cells.</title>
        <authorList>
            <person name="Tuyaerts S."/>
            <person name="Van Meirvenne S."/>
            <person name="Bonehill A."/>
            <person name="Heirman C."/>
            <person name="Corthals J."/>
            <person name="Waldmann H."/>
            <person name="Breckpot K."/>
            <person name="Thielemans K."/>
            <person name="Aerts J.L."/>
        </authorList>
    </citation>
    <scope>FUNCTION</scope>
    <scope>SUBCELLULAR LOCATION</scope>
</reference>
<reference key="9">
    <citation type="journal article" date="2013" name="J. Pharmacol. Exp. Ther.">
        <title>Glucocorticoid-induced tumor necrosis factor receptor family-related ligand triggering upregulates vascular cell adhesion molecule-1 and intercellular adhesion molecule-1 and promotes leukocyte adhesion.</title>
        <authorList>
            <person name="Lacal P.M."/>
            <person name="Petrillo M.G."/>
            <person name="Ruffini F."/>
            <person name="Muzi A."/>
            <person name="Bianchini R."/>
            <person name="Ronchetti S."/>
            <person name="Migliorati G."/>
            <person name="Riccardi C."/>
            <person name="Graziani G."/>
            <person name="Nocentini G."/>
        </authorList>
    </citation>
    <scope>FUNCTION</scope>
</reference>
<reference key="10">
    <citation type="journal article" date="2007" name="Proc. Natl. Acad. Sci. U.S.A.">
        <title>Assembly and structural properties of glucocorticoid-induced TNF receptor ligand: implications for function.</title>
        <authorList>
            <person name="Chattopadhyay K."/>
            <person name="Ramagopal U.A."/>
            <person name="Mukhopadhaya A."/>
            <person name="Malashkevich V.N."/>
            <person name="Dilorenzo T.P."/>
            <person name="Brenowitz M."/>
            <person name="Nathenson S.G."/>
            <person name="Almo S.C."/>
        </authorList>
    </citation>
    <scope>X-RAY CRYSTALLOGRAPHY (1.95 ANGSTROMS) OF 52-177</scope>
    <scope>FUNCTION</scope>
    <scope>SUBUNIT</scope>
    <scope>DISULFIDE BOND</scope>
</reference>
<dbReference type="EMBL" id="AL031599">
    <property type="status" value="NOT_ANNOTATED_CDS"/>
    <property type="molecule type" value="Genomic_DNA"/>
</dbReference>
<dbReference type="EMBL" id="CH471067">
    <property type="protein sequence ID" value="EAW90937.1"/>
    <property type="molecule type" value="Genomic_DNA"/>
</dbReference>
<dbReference type="EMBL" id="BC069111">
    <property type="protein sequence ID" value="AAH69111.1"/>
    <property type="molecule type" value="mRNA"/>
</dbReference>
<dbReference type="EMBL" id="BC069319">
    <property type="protein sequence ID" value="AAH69319.1"/>
    <property type="molecule type" value="mRNA"/>
</dbReference>
<dbReference type="EMBL" id="BC093986">
    <property type="protein sequence ID" value="AAH93986.1"/>
    <property type="molecule type" value="mRNA"/>
</dbReference>
<dbReference type="EMBL" id="BC112032">
    <property type="protein sequence ID" value="AAI12033.1"/>
    <property type="molecule type" value="mRNA"/>
</dbReference>
<dbReference type="EMBL" id="AK313273">
    <property type="protein sequence ID" value="BAG36082.1"/>
    <property type="molecule type" value="mRNA"/>
</dbReference>
<dbReference type="EMBL" id="AY358868">
    <property type="protein sequence ID" value="AAQ89227.1"/>
    <property type="molecule type" value="mRNA"/>
</dbReference>
<dbReference type="EMBL" id="AF125303">
    <property type="protein sequence ID" value="AAD22634.1"/>
    <property type="molecule type" value="mRNA"/>
</dbReference>
<dbReference type="EMBL" id="AF117713">
    <property type="protein sequence ID" value="AAD19695.1"/>
    <property type="molecule type" value="mRNA"/>
</dbReference>
<dbReference type="CCDS" id="CCDS1305.3"/>
<dbReference type="RefSeq" id="NP_005083.3">
    <property type="nucleotide sequence ID" value="NM_005092.4"/>
</dbReference>
<dbReference type="PDB" id="2Q1M">
    <property type="method" value="X-ray"/>
    <property type="resolution" value="2.30 A"/>
    <property type="chains" value="A=52-177"/>
</dbReference>
<dbReference type="PDB" id="2R30">
    <property type="method" value="X-ray"/>
    <property type="resolution" value="3.20 A"/>
    <property type="chains" value="A=52-177"/>
</dbReference>
<dbReference type="PDB" id="2R32">
    <property type="method" value="X-ray"/>
    <property type="resolution" value="1.95 A"/>
    <property type="chains" value="A=52-177"/>
</dbReference>
<dbReference type="PDB" id="3B93">
    <property type="method" value="X-ray"/>
    <property type="resolution" value="2.20 A"/>
    <property type="chains" value="A/B/C=50-177"/>
</dbReference>
<dbReference type="PDB" id="3B94">
    <property type="method" value="X-ray"/>
    <property type="resolution" value="2.50 A"/>
    <property type="chains" value="A/B/C/D=50-177"/>
</dbReference>
<dbReference type="PDB" id="7KHD">
    <property type="method" value="X-ray"/>
    <property type="resolution" value="2.96 A"/>
    <property type="chains" value="A/B=50-177"/>
</dbReference>
<dbReference type="PDB" id="7LAW">
    <property type="method" value="X-ray"/>
    <property type="resolution" value="2.75 A"/>
    <property type="chains" value="A/B=50-177"/>
</dbReference>
<dbReference type="PDBsum" id="2Q1M"/>
<dbReference type="PDBsum" id="2R30"/>
<dbReference type="PDBsum" id="2R32"/>
<dbReference type="PDBsum" id="3B93"/>
<dbReference type="PDBsum" id="3B94"/>
<dbReference type="PDBsum" id="7KHD"/>
<dbReference type="PDBsum" id="7LAW"/>
<dbReference type="SMR" id="Q9UNG2"/>
<dbReference type="BioGRID" id="114476">
    <property type="interactions" value="71"/>
</dbReference>
<dbReference type="DIP" id="DIP-29882N"/>
<dbReference type="FunCoup" id="Q9UNG2">
    <property type="interactions" value="319"/>
</dbReference>
<dbReference type="IntAct" id="Q9UNG2">
    <property type="interactions" value="68"/>
</dbReference>
<dbReference type="STRING" id="9606.ENSP00000385470"/>
<dbReference type="GlyCosmos" id="Q9UNG2">
    <property type="glycosylation" value="2 sites, No reported glycans"/>
</dbReference>
<dbReference type="GlyGen" id="Q9UNG2">
    <property type="glycosylation" value="2 sites"/>
</dbReference>
<dbReference type="BioMuta" id="TNFSF18"/>
<dbReference type="DMDM" id="325511353"/>
<dbReference type="MassIVE" id="Q9UNG2"/>
<dbReference type="PaxDb" id="9606-ENSP00000385470"/>
<dbReference type="PeptideAtlas" id="Q9UNG2"/>
<dbReference type="ProteomicsDB" id="85288"/>
<dbReference type="Antibodypedia" id="2126">
    <property type="antibodies" value="617 antibodies from 38 providers"/>
</dbReference>
<dbReference type="DNASU" id="8995"/>
<dbReference type="Ensembl" id="ENST00000404377.5">
    <property type="protein sequence ID" value="ENSP00000385470.4"/>
    <property type="gene ID" value="ENSG00000120337.10"/>
</dbReference>
<dbReference type="GeneID" id="8995"/>
<dbReference type="KEGG" id="hsa:8995"/>
<dbReference type="MANE-Select" id="ENST00000404377.5">
    <property type="protein sequence ID" value="ENSP00000385470.4"/>
    <property type="RefSeq nucleotide sequence ID" value="NM_005092.4"/>
    <property type="RefSeq protein sequence ID" value="NP_005083.3"/>
</dbReference>
<dbReference type="UCSC" id="uc001giu.3">
    <property type="organism name" value="human"/>
</dbReference>
<dbReference type="AGR" id="HGNC:11932"/>
<dbReference type="CTD" id="8995"/>
<dbReference type="DisGeNET" id="8995"/>
<dbReference type="GeneCards" id="TNFSF18"/>
<dbReference type="HGNC" id="HGNC:11932">
    <property type="gene designation" value="TNFSF18"/>
</dbReference>
<dbReference type="HPA" id="ENSG00000120337">
    <property type="expression patterns" value="Tissue enhanced (brain, gallbladder, pancreas)"/>
</dbReference>
<dbReference type="MIM" id="603898">
    <property type="type" value="gene"/>
</dbReference>
<dbReference type="neXtProt" id="NX_Q9UNG2"/>
<dbReference type="OpenTargets" id="ENSG00000120337"/>
<dbReference type="PharmGKB" id="PA36624"/>
<dbReference type="VEuPathDB" id="HostDB:ENSG00000120337"/>
<dbReference type="eggNOG" id="ENOG502SWIC">
    <property type="taxonomic scope" value="Eukaryota"/>
</dbReference>
<dbReference type="GeneTree" id="ENSGT00390000002560"/>
<dbReference type="HOGENOM" id="CLU_134507_0_0_1"/>
<dbReference type="InParanoid" id="Q9UNG2"/>
<dbReference type="OrthoDB" id="9096520at2759"/>
<dbReference type="PAN-GO" id="Q9UNG2">
    <property type="GO annotations" value="5 GO annotations based on evolutionary models"/>
</dbReference>
<dbReference type="PhylomeDB" id="Q9UNG2"/>
<dbReference type="TreeFam" id="TF338614"/>
<dbReference type="PathwayCommons" id="Q9UNG2"/>
<dbReference type="Reactome" id="R-HSA-5669034">
    <property type="pathway name" value="TNFs bind their physiological receptors"/>
</dbReference>
<dbReference type="SignaLink" id="Q9UNG2"/>
<dbReference type="BioGRID-ORCS" id="8995">
    <property type="hits" value="12 hits in 1150 CRISPR screens"/>
</dbReference>
<dbReference type="EvolutionaryTrace" id="Q9UNG2"/>
<dbReference type="GeneWiki" id="TNFSF18"/>
<dbReference type="GenomeRNAi" id="8995"/>
<dbReference type="Pharos" id="Q9UNG2">
    <property type="development level" value="Tbio"/>
</dbReference>
<dbReference type="PRO" id="PR:Q9UNG2"/>
<dbReference type="Proteomes" id="UP000005640">
    <property type="component" value="Chromosome 1"/>
</dbReference>
<dbReference type="RNAct" id="Q9UNG2">
    <property type="molecule type" value="protein"/>
</dbReference>
<dbReference type="Bgee" id="ENSG00000120337">
    <property type="expression patterns" value="Expressed in male germ line stem cell (sensu Vertebrata) in testis and 78 other cell types or tissues"/>
</dbReference>
<dbReference type="GO" id="GO:0009986">
    <property type="term" value="C:cell surface"/>
    <property type="evidence" value="ECO:0000250"/>
    <property type="project" value="UniProtKB"/>
</dbReference>
<dbReference type="GO" id="GO:0005615">
    <property type="term" value="C:extracellular space"/>
    <property type="evidence" value="ECO:0007669"/>
    <property type="project" value="UniProtKB-KW"/>
</dbReference>
<dbReference type="GO" id="GO:0005886">
    <property type="term" value="C:plasma membrane"/>
    <property type="evidence" value="ECO:0000304"/>
    <property type="project" value="Reactome"/>
</dbReference>
<dbReference type="GO" id="GO:0005125">
    <property type="term" value="F:cytokine activity"/>
    <property type="evidence" value="ECO:0007669"/>
    <property type="project" value="UniProtKB-KW"/>
</dbReference>
<dbReference type="GO" id="GO:0042802">
    <property type="term" value="F:identical protein binding"/>
    <property type="evidence" value="ECO:0000353"/>
    <property type="project" value="IntAct"/>
</dbReference>
<dbReference type="GO" id="GO:0005102">
    <property type="term" value="F:signaling receptor binding"/>
    <property type="evidence" value="ECO:0000304"/>
    <property type="project" value="ProtInc"/>
</dbReference>
<dbReference type="GO" id="GO:0032813">
    <property type="term" value="F:tumor necrosis factor receptor superfamily binding"/>
    <property type="evidence" value="ECO:0000250"/>
    <property type="project" value="UniProtKB"/>
</dbReference>
<dbReference type="GO" id="GO:0002250">
    <property type="term" value="P:adaptive immune response"/>
    <property type="evidence" value="ECO:0007669"/>
    <property type="project" value="UniProtKB-KW"/>
</dbReference>
<dbReference type="GO" id="GO:0007267">
    <property type="term" value="P:cell-cell signaling"/>
    <property type="evidence" value="ECO:0000304"/>
    <property type="project" value="ProtInc"/>
</dbReference>
<dbReference type="GO" id="GO:0043066">
    <property type="term" value="P:negative regulation of apoptotic process"/>
    <property type="evidence" value="ECO:0000304"/>
    <property type="project" value="ProtInc"/>
</dbReference>
<dbReference type="GO" id="GO:2000329">
    <property type="term" value="P:negative regulation of T-helper 17 cell lineage commitment"/>
    <property type="evidence" value="ECO:0007669"/>
    <property type="project" value="Ensembl"/>
</dbReference>
<dbReference type="GO" id="GO:0045785">
    <property type="term" value="P:positive regulation of cell adhesion"/>
    <property type="evidence" value="ECO:0000315"/>
    <property type="project" value="UniProtKB"/>
</dbReference>
<dbReference type="GO" id="GO:0050729">
    <property type="term" value="P:positive regulation of inflammatory response"/>
    <property type="evidence" value="ECO:0007669"/>
    <property type="project" value="Ensembl"/>
</dbReference>
<dbReference type="GO" id="GO:0002687">
    <property type="term" value="P:positive regulation of leukocyte migration"/>
    <property type="evidence" value="ECO:0000315"/>
    <property type="project" value="UniProtKB"/>
</dbReference>
<dbReference type="GO" id="GO:0010759">
    <property type="term" value="P:positive regulation of macrophage chemotaxis"/>
    <property type="evidence" value="ECO:0007669"/>
    <property type="project" value="Ensembl"/>
</dbReference>
<dbReference type="GO" id="GO:0090026">
    <property type="term" value="P:positive regulation of monocyte chemotaxis"/>
    <property type="evidence" value="ECO:0007669"/>
    <property type="project" value="Ensembl"/>
</dbReference>
<dbReference type="GO" id="GO:0051092">
    <property type="term" value="P:positive regulation of NF-kappaB transcription factor activity"/>
    <property type="evidence" value="ECO:0000250"/>
    <property type="project" value="UniProtKB"/>
</dbReference>
<dbReference type="GO" id="GO:0042531">
    <property type="term" value="P:positive regulation of tyrosine phosphorylation of STAT protein"/>
    <property type="evidence" value="ECO:0000315"/>
    <property type="project" value="UniProtKB"/>
</dbReference>
<dbReference type="GO" id="GO:2000508">
    <property type="term" value="P:regulation of dendritic cell chemotaxis"/>
    <property type="evidence" value="ECO:0007669"/>
    <property type="project" value="Ensembl"/>
</dbReference>
<dbReference type="GO" id="GO:0043254">
    <property type="term" value="P:regulation of protein-containing complex assembly"/>
    <property type="evidence" value="ECO:0007669"/>
    <property type="project" value="Ensembl"/>
</dbReference>
<dbReference type="GO" id="GO:0042129">
    <property type="term" value="P:regulation of T cell proliferation"/>
    <property type="evidence" value="ECO:0000250"/>
    <property type="project" value="UniProtKB"/>
</dbReference>
<dbReference type="GO" id="GO:0007165">
    <property type="term" value="P:signal transduction"/>
    <property type="evidence" value="ECO:0000304"/>
    <property type="project" value="ProtInc"/>
</dbReference>
<dbReference type="GO" id="GO:0002309">
    <property type="term" value="P:T cell proliferation involved in immune response"/>
    <property type="evidence" value="ECO:0000250"/>
    <property type="project" value="UniProtKB"/>
</dbReference>
<dbReference type="GO" id="GO:0033209">
    <property type="term" value="P:tumor necrosis factor-mediated signaling pathway"/>
    <property type="evidence" value="ECO:0000250"/>
    <property type="project" value="UniProtKB"/>
</dbReference>
<dbReference type="FunFam" id="2.60.120.40:FF:000026">
    <property type="entry name" value="Tumor necrosis factor ligand superfamily member 18"/>
    <property type="match status" value="1"/>
</dbReference>
<dbReference type="Gene3D" id="2.60.120.40">
    <property type="match status" value="1"/>
</dbReference>
<dbReference type="InterPro" id="IPR006052">
    <property type="entry name" value="TNF_dom"/>
</dbReference>
<dbReference type="InterPro" id="IPR042380">
    <property type="entry name" value="TNFSF18"/>
</dbReference>
<dbReference type="InterPro" id="IPR008983">
    <property type="entry name" value="Tumour_necrosis_fac-like_dom"/>
</dbReference>
<dbReference type="PANTHER" id="PTHR15267">
    <property type="entry name" value="TUMOR NECROSIS FACTOR LIGAND SUPERFAMILY MEMBER 18"/>
    <property type="match status" value="1"/>
</dbReference>
<dbReference type="PANTHER" id="PTHR15267:SF1">
    <property type="entry name" value="TUMOR NECROSIS FACTOR LIGAND SUPERFAMILY MEMBER 18"/>
    <property type="match status" value="1"/>
</dbReference>
<dbReference type="SUPFAM" id="SSF49842">
    <property type="entry name" value="TNF-like"/>
    <property type="match status" value="1"/>
</dbReference>
<dbReference type="PROSITE" id="PS50049">
    <property type="entry name" value="THD_2"/>
    <property type="match status" value="1"/>
</dbReference>
<organism>
    <name type="scientific">Homo sapiens</name>
    <name type="common">Human</name>
    <dbReference type="NCBI Taxonomy" id="9606"/>
    <lineage>
        <taxon>Eukaryota</taxon>
        <taxon>Metazoa</taxon>
        <taxon>Chordata</taxon>
        <taxon>Craniata</taxon>
        <taxon>Vertebrata</taxon>
        <taxon>Euteleostomi</taxon>
        <taxon>Mammalia</taxon>
        <taxon>Eutheria</taxon>
        <taxon>Euarchontoglires</taxon>
        <taxon>Primates</taxon>
        <taxon>Haplorrhini</taxon>
        <taxon>Catarrhini</taxon>
        <taxon>Hominidae</taxon>
        <taxon>Homo</taxon>
    </lineage>
</organism>
<name>TNF18_HUMAN</name>
<comment type="function">
    <text evidence="2 5 6 7">Cytokine that binds to TNFRSF18/AITR/GITR. Regulates T-cell responses. Can function as costimulator and lower the threshold for T-cell activation and T-cell proliferation. Important for interactions between activated T-lymphocytes and endothelial cells. Mediates activation of NF-kappa-B. Triggers increased phosphorylation of STAT1 and up-regulates expression of VCAM1 and ICAM1 (PubMed:23892569). Promotes leukocyte adhesion to endothelial cells (PubMed:23892569). Regulates migration of monocytes from the splenic reservoir to sites of inflammation (By similarity).</text>
</comment>
<comment type="subunit">
    <text evidence="1 6">Homodimer (By similarity). Homotrimer.</text>
</comment>
<comment type="interaction">
    <interactant intactId="EBI-15672281">
        <id>Q9UNG2</id>
    </interactant>
    <interactant intactId="EBI-14890134">
        <id>Q2M3D2</id>
        <label>EXOC3L2</label>
    </interactant>
    <organismsDiffer>false</organismsDiffer>
    <experiments>3</experiments>
</comment>
<comment type="interaction">
    <interactant intactId="EBI-15672281">
        <id>Q9UNG2</id>
    </interactant>
    <interactant intactId="EBI-3962532">
        <id>Q9Y5U5</id>
        <label>TNFRSF18</label>
    </interactant>
    <organismsDiffer>false</organismsDiffer>
    <experiments>2</experiments>
</comment>
<comment type="interaction">
    <interactant intactId="EBI-15672281">
        <id>Q9UNG2</id>
    </interactant>
    <interactant intactId="EBI-15672281">
        <id>Q9UNG2</id>
        <label>TNFSF18</label>
    </interactant>
    <organismsDiffer>false</organismsDiffer>
    <experiments>7</experiments>
</comment>
<comment type="subcellular location">
    <subcellularLocation>
        <location evidence="5">Cell membrane</location>
        <topology evidence="5">Single-pass type II membrane protein</topology>
    </subcellularLocation>
</comment>
<comment type="tissue specificity">
    <text>Expressed at high levels in the small intestine, ovary, testis, kidney and endothelial cells.</text>
</comment>
<comment type="induction">
    <text>Up-regulated after stimulation by bacterial lipopolysaccharides (LPS).</text>
</comment>
<comment type="similarity">
    <text evidence="8">Belongs to the tumor necrosis factor family.</text>
</comment>
<comment type="online information" name="Atlas of Genetics and Cytogenetics in Oncology and Haematology">
    <link uri="https://atlasgeneticsoncology.org/gene/42639/TNFSF18"/>
</comment>
<accession>Q9UNG2</accession>
<accession>A9IQG8</accession>
<accession>O95852</accession>
<accession>Q6ISV1</accession>
<protein>
    <recommendedName>
        <fullName evidence="8">Tumor necrosis factor ligand superfamily member 18</fullName>
    </recommendedName>
    <alternativeName>
        <fullName>Activation-inducible TNF-related ligand</fullName>
        <shortName>AITRL</shortName>
    </alternativeName>
    <alternativeName>
        <fullName>Glucocorticoid-induced TNF-related ligand</fullName>
        <shortName>hGITRL</shortName>
    </alternativeName>
</protein>